<reference key="1">
    <citation type="journal article" date="1997" name="Nature">
        <title>The nucleotide sequence of Saccharomyces cerevisiae chromosome XIII.</title>
        <authorList>
            <person name="Bowman S."/>
            <person name="Churcher C.M."/>
            <person name="Badcock K."/>
            <person name="Brown D."/>
            <person name="Chillingworth T."/>
            <person name="Connor R."/>
            <person name="Dedman K."/>
            <person name="Devlin K."/>
            <person name="Gentles S."/>
            <person name="Hamlin N."/>
            <person name="Hunt S."/>
            <person name="Jagels K."/>
            <person name="Lye G."/>
            <person name="Moule S."/>
            <person name="Odell C."/>
            <person name="Pearson D."/>
            <person name="Rajandream M.A."/>
            <person name="Rice P."/>
            <person name="Skelton J."/>
            <person name="Walsh S.V."/>
            <person name="Whitehead S."/>
            <person name="Barrell B.G."/>
        </authorList>
    </citation>
    <scope>NUCLEOTIDE SEQUENCE [LARGE SCALE GENOMIC DNA]</scope>
    <source>
        <strain>ATCC 204508 / S288c</strain>
    </source>
</reference>
<reference key="2">
    <citation type="journal article" date="2014" name="G3 (Bethesda)">
        <title>The reference genome sequence of Saccharomyces cerevisiae: Then and now.</title>
        <authorList>
            <person name="Engel S.R."/>
            <person name="Dietrich F.S."/>
            <person name="Fisk D.G."/>
            <person name="Binkley G."/>
            <person name="Balakrishnan R."/>
            <person name="Costanzo M.C."/>
            <person name="Dwight S.S."/>
            <person name="Hitz B.C."/>
            <person name="Karra K."/>
            <person name="Nash R.S."/>
            <person name="Weng S."/>
            <person name="Wong E.D."/>
            <person name="Lloyd P."/>
            <person name="Skrzypek M.S."/>
            <person name="Miyasato S.R."/>
            <person name="Simison M."/>
            <person name="Cherry J.M."/>
        </authorList>
    </citation>
    <scope>GENOME REANNOTATION</scope>
    <source>
        <strain>ATCC 204508 / S288c</strain>
    </source>
</reference>
<reference key="3">
    <citation type="journal article" date="2003" name="Mol. Cell. Biol.">
        <title>War1p, a novel transcription factor controlling weak acid stress response in yeast.</title>
        <authorList>
            <person name="Kren A."/>
            <person name="Mamnun Y.M."/>
            <person name="Bauer B.E."/>
            <person name="Schueller C."/>
            <person name="Wolfger H."/>
            <person name="Hatzixanthis K."/>
            <person name="Mollapour M."/>
            <person name="Gregori C."/>
            <person name="Piper P.W."/>
            <person name="Kuchler K."/>
        </authorList>
    </citation>
    <scope>FUNCTION</scope>
    <scope>SUBCELLULAR LOCATION</scope>
    <scope>SUBUNIT</scope>
    <scope>PHOSPHORYLATION</scope>
</reference>
<reference key="4">
    <citation type="journal article" date="2003" name="Nature">
        <title>Global analysis of protein localization in budding yeast.</title>
        <authorList>
            <person name="Huh W.-K."/>
            <person name="Falvo J.V."/>
            <person name="Gerke L.C."/>
            <person name="Carroll A.S."/>
            <person name="Howson R.W."/>
            <person name="Weissman J.S."/>
            <person name="O'Shea E.K."/>
        </authorList>
    </citation>
    <scope>SUBCELLULAR LOCATION [LARGE SCALE ANALYSIS]</scope>
</reference>
<reference key="5">
    <citation type="journal article" date="2003" name="Nature">
        <title>Global analysis of protein expression in yeast.</title>
        <authorList>
            <person name="Ghaemmaghami S."/>
            <person name="Huh W.-K."/>
            <person name="Bower K."/>
            <person name="Howson R.W."/>
            <person name="Belle A."/>
            <person name="Dephoure N."/>
            <person name="O'Shea E.K."/>
            <person name="Weissman J.S."/>
        </authorList>
    </citation>
    <scope>LEVEL OF PROTEIN EXPRESSION [LARGE SCALE ANALYSIS]</scope>
</reference>
<reference key="6">
    <citation type="journal article" date="2004" name="Mol. Biol. Cell">
        <title>Global phenotypic analysis and transcriptional profiling defines the weak acid stress response regulon in Saccharomyces cerevisiae.</title>
        <authorList>
            <person name="Schueller C."/>
            <person name="Mamnun Y.M."/>
            <person name="Mollapour M."/>
            <person name="Krapf G."/>
            <person name="Schuster M."/>
            <person name="Bauer B.E."/>
            <person name="Piper P.W."/>
            <person name="Kuchler K."/>
        </authorList>
    </citation>
    <scope>FUNCTION</scope>
</reference>
<reference key="7">
    <citation type="journal article" date="2006" name="FEMS Yeast Res.">
        <title>A new physiological role for Pdr12p in Saccharomyces cerevisiae: export of aromatic and branched-chain organic acids produced in amino acid catabolism.</title>
        <authorList>
            <person name="Hazelwood L.A."/>
            <person name="Tai S.L."/>
            <person name="Boer V.M."/>
            <person name="de Winde J.H."/>
            <person name="Pronk J.T."/>
            <person name="Daran J.-M."/>
        </authorList>
    </citation>
    <scope>FUNCTION</scope>
</reference>
<reference key="8">
    <citation type="journal article" date="2007" name="FEBS J.">
        <title>A genetic screen identifies mutations in the yeast WAR1 gene, linking transcription factor phosphorylation to weak-acid stress adaptation.</title>
        <authorList>
            <person name="Gregori C."/>
            <person name="Bauer B.E."/>
            <person name="Schwartz C."/>
            <person name="Kren A."/>
            <person name="Schueller C."/>
            <person name="Kuchler K."/>
        </authorList>
    </citation>
    <scope>FUNCTION</scope>
    <scope>SUBCELLULAR LOCATION</scope>
    <scope>MUTAGENESIS OF LYS-762; PHE-763 AND ARG-764</scope>
</reference>
<reference key="9">
    <citation type="journal article" date="2008" name="J. Biol. Chem.">
        <title>Weak organic acids trigger conformational changes of the yeast transcription factor War1 in vivo to elicit stress adaptation.</title>
        <authorList>
            <person name="Gregori C."/>
            <person name="Schueller C."/>
            <person name="Frohner I.E."/>
            <person name="Ammerer G."/>
            <person name="Kuchler K."/>
        </authorList>
    </citation>
    <scope>FUNCTION</scope>
    <scope>MUTAGENESIS OF SER-368; TYR-452; TYR-463; ALA-640; SER-703 AND LYS-762</scope>
</reference>
<reference key="10">
    <citation type="journal article" date="2009" name="Science">
        <title>Global analysis of Cdk1 substrate phosphorylation sites provides insights into evolution.</title>
        <authorList>
            <person name="Holt L.J."/>
            <person name="Tuch B.B."/>
            <person name="Villen J."/>
            <person name="Johnson A.D."/>
            <person name="Gygi S.P."/>
            <person name="Morgan D.O."/>
        </authorList>
    </citation>
    <scope>PHOSPHORYLATION [LARGE SCALE ANALYSIS] AT THR-128</scope>
    <scope>IDENTIFICATION BY MASS SPECTROMETRY [LARGE SCALE ANALYSIS]</scope>
</reference>
<dbReference type="EMBL" id="Z46373">
    <property type="protein sequence ID" value="CAA86502.1"/>
    <property type="molecule type" value="Genomic_DNA"/>
</dbReference>
<dbReference type="EMBL" id="BK006946">
    <property type="protein sequence ID" value="DAA09821.1"/>
    <property type="molecule type" value="Genomic_DNA"/>
</dbReference>
<dbReference type="PIR" id="S48821">
    <property type="entry name" value="S48821"/>
</dbReference>
<dbReference type="RefSeq" id="NP_013635.1">
    <property type="nucleotide sequence ID" value="NM_001182435.1"/>
</dbReference>
<dbReference type="BioGRID" id="35065">
    <property type="interactions" value="73"/>
</dbReference>
<dbReference type="FunCoup" id="Q03631">
    <property type="interactions" value="377"/>
</dbReference>
<dbReference type="MINT" id="Q03631"/>
<dbReference type="STRING" id="4932.YML076C"/>
<dbReference type="GlyGen" id="Q03631">
    <property type="glycosylation" value="3 sites, 1 O-linked glycan (2 sites)"/>
</dbReference>
<dbReference type="iPTMnet" id="Q03631"/>
<dbReference type="PaxDb" id="4932-YML076C"/>
<dbReference type="PeptideAtlas" id="Q03631"/>
<dbReference type="EnsemblFungi" id="YML076C_mRNA">
    <property type="protein sequence ID" value="YML076C"/>
    <property type="gene ID" value="YML076C"/>
</dbReference>
<dbReference type="GeneID" id="854899"/>
<dbReference type="KEGG" id="sce:YML076C"/>
<dbReference type="AGR" id="SGD:S000004541"/>
<dbReference type="SGD" id="S000004541">
    <property type="gene designation" value="WAR1"/>
</dbReference>
<dbReference type="VEuPathDB" id="FungiDB:YML076C"/>
<dbReference type="eggNOG" id="ENOG502QRSG">
    <property type="taxonomic scope" value="Eukaryota"/>
</dbReference>
<dbReference type="GeneTree" id="ENSGT00940000176681"/>
<dbReference type="HOGENOM" id="CLU_004837_0_0_1"/>
<dbReference type="InParanoid" id="Q03631"/>
<dbReference type="OMA" id="IYMHEIG"/>
<dbReference type="OrthoDB" id="4454541at2759"/>
<dbReference type="BioCyc" id="YEAST:G3O-32668-MONOMER"/>
<dbReference type="BioGRID-ORCS" id="854899">
    <property type="hits" value="0 hits in 13 CRISPR screens"/>
</dbReference>
<dbReference type="PRO" id="PR:Q03631"/>
<dbReference type="Proteomes" id="UP000002311">
    <property type="component" value="Chromosome XIII"/>
</dbReference>
<dbReference type="RNAct" id="Q03631">
    <property type="molecule type" value="protein"/>
</dbReference>
<dbReference type="GO" id="GO:0005739">
    <property type="term" value="C:mitochondrion"/>
    <property type="evidence" value="ECO:0007005"/>
    <property type="project" value="SGD"/>
</dbReference>
<dbReference type="GO" id="GO:0005634">
    <property type="term" value="C:nucleus"/>
    <property type="evidence" value="ECO:0000314"/>
    <property type="project" value="SGD"/>
</dbReference>
<dbReference type="GO" id="GO:0003700">
    <property type="term" value="F:DNA-binding transcription factor activity"/>
    <property type="evidence" value="ECO:0000315"/>
    <property type="project" value="SGD"/>
</dbReference>
<dbReference type="GO" id="GO:0000981">
    <property type="term" value="F:DNA-binding transcription factor activity, RNA polymerase II-specific"/>
    <property type="evidence" value="ECO:0000318"/>
    <property type="project" value="GO_Central"/>
</dbReference>
<dbReference type="GO" id="GO:0043565">
    <property type="term" value="F:sequence-specific DNA binding"/>
    <property type="evidence" value="ECO:0000314"/>
    <property type="project" value="SGD"/>
</dbReference>
<dbReference type="GO" id="GO:0008270">
    <property type="term" value="F:zinc ion binding"/>
    <property type="evidence" value="ECO:0007669"/>
    <property type="project" value="InterPro"/>
</dbReference>
<dbReference type="GO" id="GO:0009074">
    <property type="term" value="P:aromatic amino acid family catabolic process"/>
    <property type="evidence" value="ECO:0000318"/>
    <property type="project" value="GO_Central"/>
</dbReference>
<dbReference type="GO" id="GO:0071468">
    <property type="term" value="P:cellular response to acidic pH"/>
    <property type="evidence" value="ECO:0000314"/>
    <property type="project" value="SGD"/>
</dbReference>
<dbReference type="GO" id="GO:0045944">
    <property type="term" value="P:positive regulation of transcription by RNA polymerase II"/>
    <property type="evidence" value="ECO:0000314"/>
    <property type="project" value="SGD"/>
</dbReference>
<dbReference type="CDD" id="cd00067">
    <property type="entry name" value="GAL4"/>
    <property type="match status" value="1"/>
</dbReference>
<dbReference type="InterPro" id="IPR052780">
    <property type="entry name" value="AAA_Catabolism_Regulators"/>
</dbReference>
<dbReference type="InterPro" id="IPR036864">
    <property type="entry name" value="Zn2-C6_fun-type_DNA-bd_sf"/>
</dbReference>
<dbReference type="InterPro" id="IPR001138">
    <property type="entry name" value="Zn2Cys6_DnaBD"/>
</dbReference>
<dbReference type="PANTHER" id="PTHR31644">
    <property type="entry name" value="TRANSCRIPTIONAL ACTIVATOR ARO80-RELATED"/>
    <property type="match status" value="1"/>
</dbReference>
<dbReference type="PANTHER" id="PTHR31644:SF2">
    <property type="entry name" value="TRANSCRIPTIONAL ACTIVATOR ARO80-RELATED"/>
    <property type="match status" value="1"/>
</dbReference>
<dbReference type="SMART" id="SM00066">
    <property type="entry name" value="GAL4"/>
    <property type="match status" value="1"/>
</dbReference>
<dbReference type="SUPFAM" id="SSF57701">
    <property type="entry name" value="Zn2/Cys6 DNA-binding domain"/>
    <property type="match status" value="1"/>
</dbReference>
<dbReference type="PROSITE" id="PS00463">
    <property type="entry name" value="ZN2_CY6_FUNGAL_1"/>
    <property type="match status" value="1"/>
</dbReference>
<protein>
    <recommendedName>
        <fullName>Weak acid resistance protein 1</fullName>
    </recommendedName>
</protein>
<sequence>MDTQIAITGVAVGKEINNDNSKTDQKVSLPKADVPCIDKATQTIIEGCSKDDPRLSYPTKLETTEKGKTKRNSFACVCCHSLKQKCEPSDVNDIYRKPCRRCLKHKKLCKFDLSKRTRKRKPRSRSPTPFESPMVNVSTKSKGPTDSEESSLKDGTSYLASFPSDPNAKQFPNSRTVLPGLQQSLSDLWSTLSQPPSYGAREAETTSTGEITTNNHTKSNGSVPTNPAVLASNDEHTNISDAPVIYSTYNSPVPISSAPTSINSEALFKHRPKIVGDEETQNVKVKRQKKSYSRHMTRSFRKQLQSLIISQKGKIRDISMKLDTWSKQWNDLVEKSMFLPTIADPVSVGIISHEEATLRLHLYKTEISYLSKLPFIKVEENVSVDELRKKKPILFSVIMSCVSIVLTPKQTTRGTIMKLDSFVLNLITNQIFKANNKSIEIIESLSTLCLWYNFFEWSSKTRYHIFNYICCCLTRDLGPTYVNRSFGMFSDEDPKRFKSPLELYSNGASLTLLVYISALNISIFLRQSIQARWSHVTEKACEDLVKETKKSRHYDNDKLLLDSADDPILVQFAKMNHVLENIHTHLHERDLNDDEFDDPIFTKKYLNKLMEKYHKQLQEIFTKLDRNRPRVIAFYYSVEAYLYQYKLAVFIGEMSHTINEKVELPREIMDDFVKCYHCCKSALEEFSKLEPILITSLPLFHTSRIIYTVGMLLLKLRYSVVAIPSFHDLMPLTDDAIALVIGVNNLLEKTSELYPFNNSLYKFRYVIALFCQTYANKVIDVADRYNAEREKLKEKQVIDEVSNGHDGTKPINAYVTESQKMPTEEDPIIDNNTNQNITAVPDEMLPVYSRVRDDTAAMNLNINSTSYMNESPHEHRESMTGTTLLPPPFISNDVTNSADSTNIKPSPSSSVDNLNDYLTDINSLAWGVNSLNDEFWTDLFMNDI</sequence>
<keyword id="KW-0238">DNA-binding</keyword>
<keyword id="KW-0479">Metal-binding</keyword>
<keyword id="KW-0539">Nucleus</keyword>
<keyword id="KW-0597">Phosphoprotein</keyword>
<keyword id="KW-1185">Reference proteome</keyword>
<keyword id="KW-0804">Transcription</keyword>
<keyword id="KW-0805">Transcription regulation</keyword>
<keyword id="KW-0862">Zinc</keyword>
<accession>Q03631</accession>
<accession>D6W0K7</accession>
<organism>
    <name type="scientific">Saccharomyces cerevisiae (strain ATCC 204508 / S288c)</name>
    <name type="common">Baker's yeast</name>
    <dbReference type="NCBI Taxonomy" id="559292"/>
    <lineage>
        <taxon>Eukaryota</taxon>
        <taxon>Fungi</taxon>
        <taxon>Dikarya</taxon>
        <taxon>Ascomycota</taxon>
        <taxon>Saccharomycotina</taxon>
        <taxon>Saccharomycetes</taxon>
        <taxon>Saccharomycetales</taxon>
        <taxon>Saccharomycetaceae</taxon>
        <taxon>Saccharomyces</taxon>
    </lineage>
</organism>
<feature type="chain" id="PRO_0000115004" description="Weak acid resistance protein 1">
    <location>
        <begin position="1"/>
        <end position="944"/>
    </location>
</feature>
<feature type="DNA-binding region" description="Zn(2)-C6 fungal-type">
    <location>
        <begin position="76"/>
        <end position="109"/>
    </location>
</feature>
<feature type="region of interest" description="Disordered" evidence="1">
    <location>
        <begin position="114"/>
        <end position="171"/>
    </location>
</feature>
<feature type="region of interest" description="Disordered" evidence="1">
    <location>
        <begin position="197"/>
        <end position="225"/>
    </location>
</feature>
<feature type="compositionally biased region" description="Polar residues" evidence="1">
    <location>
        <begin position="135"/>
        <end position="144"/>
    </location>
</feature>
<feature type="compositionally biased region" description="Polar residues" evidence="1">
    <location>
        <begin position="205"/>
        <end position="225"/>
    </location>
</feature>
<feature type="modified residue" description="Phosphothreonine" evidence="9">
    <location>
        <position position="128"/>
    </location>
</feature>
<feature type="mutagenesis site" description="Causes hyperactivity with constitutive induction of PDR12." evidence="8">
    <original>S</original>
    <variation>L</variation>
    <location>
        <position position="368"/>
    </location>
</feature>
<feature type="mutagenesis site" description="Causes hyperactivity with constitutive induction of PDR12." evidence="8">
    <original>Y</original>
    <variation>C</variation>
    <location>
        <position position="452"/>
    </location>
</feature>
<feature type="mutagenesis site" description="Causes hyperactivity with constitutive induction of PDR12." evidence="8">
    <original>Y</original>
    <variation>C</variation>
    <location>
        <position position="463"/>
    </location>
</feature>
<feature type="mutagenesis site" description="Causes hyperactivity with constitutive induction of PDR12." evidence="8">
    <original>A</original>
    <variation>T</variation>
    <location>
        <position position="640"/>
    </location>
</feature>
<feature type="mutagenesis site" description="Causes hyperactivitywith constitutive induction of PDR12." evidence="8">
    <original>S</original>
    <variation>P</variation>
    <location>
        <position position="703"/>
    </location>
</feature>
<feature type="mutagenesis site" description="Causes hyperactivity with constitutive induction of PDR12." evidence="7 8">
    <original>K</original>
    <variation>R</variation>
    <variation>N</variation>
    <location>
        <position position="762"/>
    </location>
</feature>
<feature type="mutagenesis site" description="Causes hyperactivity with constitutive induction of PDR12." evidence="7">
    <original>F</original>
    <variation>M</variation>
    <location>
        <position position="763"/>
    </location>
</feature>
<feature type="mutagenesis site" description="Causes hypersensitivity to sorbate through its inability to induce PDR12." evidence="7">
    <location>
        <position position="764"/>
    </location>
</feature>
<proteinExistence type="evidence at protein level"/>
<gene>
    <name type="primary">WAR1</name>
    <name type="ordered locus">YML076C</name>
</gene>
<evidence type="ECO:0000256" key="1">
    <source>
        <dbReference type="SAM" id="MobiDB-lite"/>
    </source>
</evidence>
<evidence type="ECO:0000269" key="2">
    <source>
    </source>
</evidence>
<evidence type="ECO:0000269" key="3">
    <source>
    </source>
</evidence>
<evidence type="ECO:0000269" key="4">
    <source>
    </source>
</evidence>
<evidence type="ECO:0000269" key="5">
    <source>
    </source>
</evidence>
<evidence type="ECO:0000269" key="6">
    <source>
    </source>
</evidence>
<evidence type="ECO:0000269" key="7">
    <source>
    </source>
</evidence>
<evidence type="ECO:0000269" key="8">
    <source>
    </source>
</evidence>
<evidence type="ECO:0007744" key="9">
    <source>
    </source>
</evidence>
<name>WAR1_YEAST</name>
<comment type="function">
    <text evidence="2 5 6 7 8">transcription factor which binds to a weak acid response element (WARE) to mediate stress induction of PDR12 and FUN34, encoding an acid transporter and a putative ammonia transporter, respectively.</text>
</comment>
<comment type="subunit">
    <text evidence="2">Homodimer.</text>
</comment>
<comment type="subcellular location">
    <subcellularLocation>
        <location evidence="2 3 7">Nucleus</location>
    </subcellularLocation>
</comment>
<comment type="PTM">
    <text evidence="2">Phosphorylation is required for PDR12 induction.</text>
</comment>
<comment type="miscellaneous">
    <text evidence="4">Present with 907 molecules/cell in log phase SD medium.</text>
</comment>